<accession>A3CRD6</accession>
<evidence type="ECO:0000255" key="1">
    <source>
        <dbReference type="HAMAP-Rule" id="MF_01407"/>
    </source>
</evidence>
<dbReference type="EMBL" id="CP000562">
    <property type="protein sequence ID" value="ABN55936.1"/>
    <property type="molecule type" value="Genomic_DNA"/>
</dbReference>
<dbReference type="RefSeq" id="WP_011842857.1">
    <property type="nucleotide sequence ID" value="NC_009051.1"/>
</dbReference>
<dbReference type="SMR" id="A3CRD6"/>
<dbReference type="STRING" id="368407.Memar_0001"/>
<dbReference type="GeneID" id="4848380"/>
<dbReference type="KEGG" id="mem:Memar_0001"/>
<dbReference type="eggNOG" id="arCOG00467">
    <property type="taxonomic scope" value="Archaea"/>
</dbReference>
<dbReference type="HOGENOM" id="CLU_025112_3_1_2"/>
<dbReference type="OrthoDB" id="195574at2157"/>
<dbReference type="Proteomes" id="UP000002146">
    <property type="component" value="Chromosome"/>
</dbReference>
<dbReference type="GO" id="GO:0005524">
    <property type="term" value="F:ATP binding"/>
    <property type="evidence" value="ECO:0007669"/>
    <property type="project" value="UniProtKB-UniRule"/>
</dbReference>
<dbReference type="GO" id="GO:0016887">
    <property type="term" value="F:ATP hydrolysis activity"/>
    <property type="evidence" value="ECO:0007669"/>
    <property type="project" value="InterPro"/>
</dbReference>
<dbReference type="GO" id="GO:0006260">
    <property type="term" value="P:DNA replication"/>
    <property type="evidence" value="ECO:0007669"/>
    <property type="project" value="UniProtKB-UniRule"/>
</dbReference>
<dbReference type="CDD" id="cd00009">
    <property type="entry name" value="AAA"/>
    <property type="match status" value="1"/>
</dbReference>
<dbReference type="CDD" id="cd08768">
    <property type="entry name" value="Cdc6_C"/>
    <property type="match status" value="1"/>
</dbReference>
<dbReference type="FunFam" id="1.10.8.60:FF:000073">
    <property type="entry name" value="ORC1-type DNA replication protein"/>
    <property type="match status" value="1"/>
</dbReference>
<dbReference type="FunFam" id="3.40.50.300:FF:000930">
    <property type="entry name" value="ORC1-type DNA replication protein"/>
    <property type="match status" value="1"/>
</dbReference>
<dbReference type="Gene3D" id="1.10.8.60">
    <property type="match status" value="1"/>
</dbReference>
<dbReference type="Gene3D" id="3.40.50.300">
    <property type="entry name" value="P-loop containing nucleotide triphosphate hydrolases"/>
    <property type="match status" value="1"/>
</dbReference>
<dbReference type="Gene3D" id="1.10.10.10">
    <property type="entry name" value="Winged helix-like DNA-binding domain superfamily/Winged helix DNA-binding domain"/>
    <property type="match status" value="1"/>
</dbReference>
<dbReference type="HAMAP" id="MF_01407">
    <property type="entry name" value="ORC1_type_DNA_replic_protein"/>
    <property type="match status" value="1"/>
</dbReference>
<dbReference type="InterPro" id="IPR003593">
    <property type="entry name" value="AAA+_ATPase"/>
</dbReference>
<dbReference type="InterPro" id="IPR049945">
    <property type="entry name" value="AAA_22"/>
</dbReference>
<dbReference type="InterPro" id="IPR015163">
    <property type="entry name" value="Cdc6_C"/>
</dbReference>
<dbReference type="InterPro" id="IPR055237">
    <property type="entry name" value="Cdc6_lid"/>
</dbReference>
<dbReference type="InterPro" id="IPR050311">
    <property type="entry name" value="ORC1/CDC6"/>
</dbReference>
<dbReference type="InterPro" id="IPR014277">
    <property type="entry name" value="Orc1/Cdc6_arc"/>
</dbReference>
<dbReference type="InterPro" id="IPR027417">
    <property type="entry name" value="P-loop_NTPase"/>
</dbReference>
<dbReference type="InterPro" id="IPR036388">
    <property type="entry name" value="WH-like_DNA-bd_sf"/>
</dbReference>
<dbReference type="InterPro" id="IPR036390">
    <property type="entry name" value="WH_DNA-bd_sf"/>
</dbReference>
<dbReference type="NCBIfam" id="TIGR02928">
    <property type="entry name" value="orc1/cdc6 family replication initiation protein"/>
    <property type="match status" value="1"/>
</dbReference>
<dbReference type="NCBIfam" id="NF001625">
    <property type="entry name" value="PRK00411.1-3"/>
    <property type="match status" value="1"/>
</dbReference>
<dbReference type="PANTHER" id="PTHR10763">
    <property type="entry name" value="CELL DIVISION CONTROL PROTEIN 6-RELATED"/>
    <property type="match status" value="1"/>
</dbReference>
<dbReference type="PANTHER" id="PTHR10763:SF22">
    <property type="entry name" value="ORC1-TYPE DNA REPLICATION PROTEIN"/>
    <property type="match status" value="1"/>
</dbReference>
<dbReference type="Pfam" id="PF13401">
    <property type="entry name" value="AAA_22"/>
    <property type="match status" value="1"/>
</dbReference>
<dbReference type="Pfam" id="PF09079">
    <property type="entry name" value="Cdc6_C"/>
    <property type="match status" value="1"/>
</dbReference>
<dbReference type="Pfam" id="PF22703">
    <property type="entry name" value="Cdc6_lid"/>
    <property type="match status" value="1"/>
</dbReference>
<dbReference type="SMART" id="SM00382">
    <property type="entry name" value="AAA"/>
    <property type="match status" value="1"/>
</dbReference>
<dbReference type="SMART" id="SM01074">
    <property type="entry name" value="Cdc6_C"/>
    <property type="match status" value="1"/>
</dbReference>
<dbReference type="SUPFAM" id="SSF52540">
    <property type="entry name" value="P-loop containing nucleoside triphosphate hydrolases"/>
    <property type="match status" value="1"/>
</dbReference>
<dbReference type="SUPFAM" id="SSF46785">
    <property type="entry name" value="Winged helix' DNA-binding domain"/>
    <property type="match status" value="1"/>
</dbReference>
<proteinExistence type="inferred from homology"/>
<name>CDC6_METMJ</name>
<gene>
    <name type="primary">cdc6</name>
    <name type="ordered locus">Memar_0001</name>
</gene>
<feature type="chain" id="PRO_0000307415" description="ORC1-type DNA replication protein">
    <location>
        <begin position="1"/>
        <end position="427"/>
    </location>
</feature>
<feature type="binding site" evidence="1">
    <location>
        <begin position="71"/>
        <end position="75"/>
    </location>
    <ligand>
        <name>ATP</name>
        <dbReference type="ChEBI" id="CHEBI:30616"/>
    </ligand>
</feature>
<feature type="binding site" evidence="1">
    <location>
        <position position="226"/>
    </location>
    <ligand>
        <name>ATP</name>
        <dbReference type="ChEBI" id="CHEBI:30616"/>
    </ligand>
</feature>
<feature type="binding site" evidence="1">
    <location>
        <position position="238"/>
    </location>
    <ligand>
        <name>ATP</name>
        <dbReference type="ChEBI" id="CHEBI:30616"/>
    </ligand>
</feature>
<reference key="1">
    <citation type="journal article" date="2009" name="Stand. Genomic Sci.">
        <title>Complete genome sequence of Methanoculleus marisnigri Romesser et al. 1981 type strain JR1.</title>
        <authorList>
            <person name="Anderson I.J."/>
            <person name="Sieprawska-Lupa M."/>
            <person name="Lapidus A."/>
            <person name="Nolan M."/>
            <person name="Copeland A."/>
            <person name="Glavina Del Rio T."/>
            <person name="Tice H."/>
            <person name="Dalin E."/>
            <person name="Barry K."/>
            <person name="Saunders E."/>
            <person name="Han C."/>
            <person name="Brettin T."/>
            <person name="Detter J.C."/>
            <person name="Bruce D."/>
            <person name="Mikhailova N."/>
            <person name="Pitluck S."/>
            <person name="Hauser L."/>
            <person name="Land M."/>
            <person name="Lucas S."/>
            <person name="Richardson P."/>
            <person name="Whitman W.B."/>
            <person name="Kyrpides N.C."/>
        </authorList>
    </citation>
    <scope>NUCLEOTIDE SEQUENCE [LARGE SCALE GENOMIC DNA]</scope>
    <source>
        <strain>ATCC 35101 / DSM 1498 / JR1</strain>
    </source>
</reference>
<protein>
    <recommendedName>
        <fullName evidence="1">ORC1-type DNA replication protein</fullName>
    </recommendedName>
</protein>
<comment type="function">
    <text evidence="1">Involved in regulation of DNA replication.</text>
</comment>
<comment type="similarity">
    <text evidence="1">Belongs to the CDC6/cdc18 family.</text>
</comment>
<keyword id="KW-0067">ATP-binding</keyword>
<keyword id="KW-0235">DNA replication</keyword>
<keyword id="KW-0547">Nucleotide-binding</keyword>
<sequence>MSDDKTSPMGLFKKYLTNRRIFKNREVLRHNYRPQILPHRKPQIDEIASILAPALTNETPSNILIYGKTGTGKTASVRYVGTELENASALAGTKCKIVHLNCEVIDTQYRVLAQIANGLDNADEHPSDSTRSHIPMTGWPTDQVYMELKNQLESSGGVMVIILDEIDKLVKKSGDDTLYNLTRINSDLKFAKVSIIGISNDLRFTDFLDPRVLSSLSEEEIVFPPYNAPQLCDILQQRAEMAFVEGALDETVIPLCAALAAQEHGDARRALDLLRVSGELADRENASGVAEKHVRMAQEKIETDSMVECISTLPTQSKAVLYAMLILEQMGKRIFTSGEVTVVYREIARIIDLDVLTHRRITDLISELNMLGVINTRVISRGRYGRTKEMWFDAATSKIEEVVTRDPRLDDERLKKLDVNRLRAMFR</sequence>
<organism>
    <name type="scientific">Methanoculleus marisnigri (strain ATCC 35101 / DSM 1498 / JR1)</name>
    <dbReference type="NCBI Taxonomy" id="368407"/>
    <lineage>
        <taxon>Archaea</taxon>
        <taxon>Methanobacteriati</taxon>
        <taxon>Methanobacteriota</taxon>
        <taxon>Stenosarchaea group</taxon>
        <taxon>Methanomicrobia</taxon>
        <taxon>Methanomicrobiales</taxon>
        <taxon>Methanomicrobiaceae</taxon>
        <taxon>Methanoculleus</taxon>
    </lineage>
</organism>